<protein>
    <recommendedName>
        <fullName evidence="8">T cell receptor beta variable 7-6</fullName>
    </recommendedName>
</protein>
<accession>A0A1B0GX31</accession>
<organism>
    <name type="scientific">Homo sapiens</name>
    <name type="common">Human</name>
    <dbReference type="NCBI Taxonomy" id="9606"/>
    <lineage>
        <taxon>Eukaryota</taxon>
        <taxon>Metazoa</taxon>
        <taxon>Chordata</taxon>
        <taxon>Craniata</taxon>
        <taxon>Vertebrata</taxon>
        <taxon>Euteleostomi</taxon>
        <taxon>Mammalia</taxon>
        <taxon>Eutheria</taxon>
        <taxon>Euarchontoglires</taxon>
        <taxon>Primates</taxon>
        <taxon>Haplorrhini</taxon>
        <taxon>Catarrhini</taxon>
        <taxon>Hominidae</taxon>
        <taxon>Homo</taxon>
    </lineage>
</organism>
<comment type="function">
    <text evidence="3 5 6 7">V region of the variable domain of T cell receptor (TR) beta chain that participates in the antigen recognition (PubMed:24600447). Alpha-beta T cell receptors are antigen specific receptors which are essential to the immune response and are present on the cell surface of T lymphocytes. Recognize peptide-major histocompatibility (MH) (pMH) complexes that are displayed by antigen presenting cells (APC), a prerequisite for efficient T cell adaptive immunity against pathogens (PubMed:25493333). Binding of alpha-beta TR to pMH complex initiates TR-CD3 clustering on the cell surface and intracellular activation of LCK that phosphorylates the ITAM motifs of CD3G, CD3D, CD3E and CD247 enabling the recruitment of ZAP70. In turn ZAP70 phosphorylates LAT, which recruits numerous signaling molecules to form the LAT signalosome. The LAT signalosome propagates signal branching to three major signaling pathways, the calcium, the mitogen-activated protein kinase (MAPK) kinase and the nuclear factor NF-kappa-B (NF-kB) pathways, leading to the mobilization of transcription factors that are critical for gene expression and essential for T cell growth and differentiation (PubMed:23524462). The T cell repertoire is generated in the thymus, by V-(D)-J rearrangement. This repertoire is then shaped by intrathymic selection events to generate a peripheral T cell pool of self-MH restricted, non-autoaggressive T cells. Post-thymic interaction of alpha-beta TR with the pMH complexes shapes TR structural and functional avidity (PubMed:15040585).</text>
</comment>
<comment type="subunit">
    <text evidence="4">Alpha-beta TR is a heterodimer composed of an alpha and beta chain; disulfide-linked. The alpha-beta TR is associated with the transmembrane signaling CD3 coreceptor proteins to form the TR-CD3 (TcR or TCR). The assembly of alpha-beta TR heterodimers with CD3 occurs in the endoplasmic reticulum where a single alpha-beta TR heterodimer associates with one CD3D-CD3E heterodimer, one CD3G-CD3E heterodimer and one CD247 homodimer forming a stable octameric structure. CD3D-CD3E and CD3G-CD3E heterodimers preferentially associate with TR alpha and TR beta chains, respectively. The association of the CD247 homodimer is the last step of TcR assembly in the endoplasmic reticulum and is required for transport to the cell surface.</text>
</comment>
<comment type="subcellular location">
    <subcellularLocation>
        <location evidence="4">Cell membrane</location>
    </subcellularLocation>
</comment>
<comment type="polymorphism">
    <text evidence="9">There are several alleles. The sequence shown is that of IMGT allele TRBV7-6*01.</text>
</comment>
<proteinExistence type="inferred from homology"/>
<gene>
    <name evidence="8" type="primary">TRBV7-6</name>
</gene>
<evidence type="ECO:0000255" key="1"/>
<evidence type="ECO:0000255" key="2">
    <source>
        <dbReference type="PROSITE-ProRule" id="PRU00114"/>
    </source>
</evidence>
<evidence type="ECO:0000303" key="3">
    <source>
    </source>
</evidence>
<evidence type="ECO:0000303" key="4">
    <source>
    </source>
</evidence>
<evidence type="ECO:0000303" key="5">
    <source>
    </source>
</evidence>
<evidence type="ECO:0000303" key="6">
    <source>
    </source>
</evidence>
<evidence type="ECO:0000303" key="7">
    <source>
    </source>
</evidence>
<evidence type="ECO:0000303" key="8">
    <source ref="2"/>
</evidence>
<evidence type="ECO:0000305" key="9"/>
<feature type="signal peptide" evidence="1">
    <location>
        <begin position="1"/>
        <end position="21"/>
    </location>
</feature>
<feature type="chain" id="PRO_5008408738" description="T cell receptor beta variable 7-6" evidence="1">
    <location>
        <begin position="22"/>
        <end position="115"/>
    </location>
</feature>
<feature type="domain" description="Ig-like" evidence="2">
    <location>
        <begin position="22"/>
        <end position="115" status="greater than"/>
    </location>
</feature>
<feature type="disulfide bond" evidence="2">
    <location>
        <begin position="42"/>
        <end position="111"/>
    </location>
</feature>
<feature type="non-terminal residue">
    <location>
        <position position="115"/>
    </location>
</feature>
<reference key="1">
    <citation type="journal article" date="2003" name="Nature">
        <title>The DNA sequence of human chromosome 7.</title>
        <authorList>
            <person name="Hillier L.W."/>
            <person name="Fulton R.S."/>
            <person name="Fulton L.A."/>
            <person name="Graves T.A."/>
            <person name="Pepin K.H."/>
            <person name="Wagner-McPherson C."/>
            <person name="Layman D."/>
            <person name="Maas J."/>
            <person name="Jaeger S."/>
            <person name="Walker R."/>
            <person name="Wylie K."/>
            <person name="Sekhon M."/>
            <person name="Becker M.C."/>
            <person name="O'Laughlin M.D."/>
            <person name="Schaller M.E."/>
            <person name="Fewell G.A."/>
            <person name="Delehaunty K.D."/>
            <person name="Miner T.L."/>
            <person name="Nash W.E."/>
            <person name="Cordes M."/>
            <person name="Du H."/>
            <person name="Sun H."/>
            <person name="Edwards J."/>
            <person name="Bradshaw-Cordum H."/>
            <person name="Ali J."/>
            <person name="Andrews S."/>
            <person name="Isak A."/>
            <person name="Vanbrunt A."/>
            <person name="Nguyen C."/>
            <person name="Du F."/>
            <person name="Lamar B."/>
            <person name="Courtney L."/>
            <person name="Kalicki J."/>
            <person name="Ozersky P."/>
            <person name="Bielicki L."/>
            <person name="Scott K."/>
            <person name="Holmes A."/>
            <person name="Harkins R."/>
            <person name="Harris A."/>
            <person name="Strong C.M."/>
            <person name="Hou S."/>
            <person name="Tomlinson C."/>
            <person name="Dauphin-Kohlberg S."/>
            <person name="Kozlowicz-Reilly A."/>
            <person name="Leonard S."/>
            <person name="Rohlfing T."/>
            <person name="Rock S.M."/>
            <person name="Tin-Wollam A.-M."/>
            <person name="Abbott A."/>
            <person name="Minx P."/>
            <person name="Maupin R."/>
            <person name="Strowmatt C."/>
            <person name="Latreille P."/>
            <person name="Miller N."/>
            <person name="Johnson D."/>
            <person name="Murray J."/>
            <person name="Woessner J.P."/>
            <person name="Wendl M.C."/>
            <person name="Yang S.-P."/>
            <person name="Schultz B.R."/>
            <person name="Wallis J.W."/>
            <person name="Spieth J."/>
            <person name="Bieri T.A."/>
            <person name="Nelson J.O."/>
            <person name="Berkowicz N."/>
            <person name="Wohldmann P.E."/>
            <person name="Cook L.L."/>
            <person name="Hickenbotham M.T."/>
            <person name="Eldred J."/>
            <person name="Williams D."/>
            <person name="Bedell J.A."/>
            <person name="Mardis E.R."/>
            <person name="Clifton S.W."/>
            <person name="Chissoe S.L."/>
            <person name="Marra M.A."/>
            <person name="Raymond C."/>
            <person name="Haugen E."/>
            <person name="Gillett W."/>
            <person name="Zhou Y."/>
            <person name="James R."/>
            <person name="Phelps K."/>
            <person name="Iadanoto S."/>
            <person name="Bubb K."/>
            <person name="Simms E."/>
            <person name="Levy R."/>
            <person name="Clendenning J."/>
            <person name="Kaul R."/>
            <person name="Kent W.J."/>
            <person name="Furey T.S."/>
            <person name="Baertsch R.A."/>
            <person name="Brent M.R."/>
            <person name="Keibler E."/>
            <person name="Flicek P."/>
            <person name="Bork P."/>
            <person name="Suyama M."/>
            <person name="Bailey J.A."/>
            <person name="Portnoy M.E."/>
            <person name="Torrents D."/>
            <person name="Chinwalla A.T."/>
            <person name="Gish W.R."/>
            <person name="Eddy S.R."/>
            <person name="McPherson J.D."/>
            <person name="Olson M.V."/>
            <person name="Eichler E.E."/>
            <person name="Green E.D."/>
            <person name="Waterston R.H."/>
            <person name="Wilson R.K."/>
        </authorList>
    </citation>
    <scope>NUCLEOTIDE SEQUENCE [LARGE SCALE GENOMIC DNA] (IMGT ALLELE TRBV7-6*01)</scope>
</reference>
<reference key="2">
    <citation type="book" date="2001" name="The T Cell Receptor FactsBook.">
        <title>The T Cell Receptor FactsBook.</title>
        <editorList>
            <person name="Lefranc M.P."/>
            <person name="Lefranc G."/>
        </editorList>
        <authorList>
            <person name="Lefranc M.P."/>
            <person name="Lefranc G."/>
        </authorList>
    </citation>
    <scope>NOMENCLATURE</scope>
</reference>
<reference key="3">
    <citation type="journal article" date="2004" name="Nat. Rev. Immunol.">
        <title>The many important facets of T-cell repertoire diversity.</title>
        <authorList>
            <person name="Nikolich-Zugich J."/>
            <person name="Slifka M.K."/>
            <person name="Messaoudi I."/>
        </authorList>
    </citation>
    <scope>REVIEW ON T CELL REPERTOIRE DIVERSITY</scope>
</reference>
<reference key="4">
    <citation type="journal article" date="2010" name="Cold Spring Harb. Perspect. Biol.">
        <title>Structural biology of the T-cell receptor: insights into receptor assembly, ligand recognition, and initiation of signaling.</title>
        <authorList>
            <person name="Wucherpfennig K.W."/>
            <person name="Gagnon E."/>
            <person name="Call M.J."/>
            <person name="Huseby E.S."/>
            <person name="Call M.E."/>
        </authorList>
    </citation>
    <scope>REVIEW ON T CELL RECEPTOR-CD3 COMPLEX ASSEMBLY</scope>
    <scope>SUBCELLULAR LOCATION</scope>
</reference>
<reference key="5">
    <citation type="journal article" date="2013" name="Nat. Rev. Immunol.">
        <title>T cell receptor signalling networks: branched, diversified and bounded.</title>
        <authorList>
            <person name="Brownlie R.J."/>
            <person name="Zamoyska R."/>
        </authorList>
    </citation>
    <scope>REVIEW ON T CELL RECEPTOR SIGNALING</scope>
</reference>
<reference key="6">
    <citation type="journal article" date="2014" name="Front. Immunol.">
        <title>Immunoglobulin and T Cell Receptor Genes: IMGT((R)) and the Birth and Rise of Immunoinformatics.</title>
        <authorList>
            <person name="Lefranc M.P."/>
        </authorList>
    </citation>
    <scope>NOMENCLATURE</scope>
</reference>
<reference key="7">
    <citation type="journal article" date="2015" name="Annu. Rev. Immunol.">
        <title>T cell antigen receptor recognition of antigen-presenting molecules.</title>
        <authorList>
            <person name="Rossjohn J."/>
            <person name="Gras S."/>
            <person name="Miles J.J."/>
            <person name="Turner S.J."/>
            <person name="Godfrey D.I."/>
            <person name="McCluskey J."/>
        </authorList>
    </citation>
    <scope>REVIEW ON FUNCTION</scope>
</reference>
<name>TVB76_HUMAN</name>
<dbReference type="EMBL" id="AC244196">
    <property type="status" value="NOT_ANNOTATED_CDS"/>
    <property type="molecule type" value="Genomic_DNA"/>
</dbReference>
<dbReference type="SMR" id="A0A1B0GX31"/>
<dbReference type="FunCoup" id="A0A1B0GX31">
    <property type="interactions" value="388"/>
</dbReference>
<dbReference type="IMGT_GENE-DB" id="TRBV7-6"/>
<dbReference type="BioMuta" id="TRBV7-6"/>
<dbReference type="MassIVE" id="A0A1B0GX31"/>
<dbReference type="Ensembl" id="ENST00000390374.3">
    <property type="protein sequence ID" value="ENSP00000374897.3"/>
    <property type="gene ID" value="ENSG00000211727.3"/>
</dbReference>
<dbReference type="AGR" id="HGNC:12240"/>
<dbReference type="GeneCards" id="TRBV7-6"/>
<dbReference type="HGNC" id="HGNC:12240">
    <property type="gene designation" value="TRBV7-6"/>
</dbReference>
<dbReference type="HPA" id="ENSG00000211727">
    <property type="expression patterns" value="Tissue enriched (lymphoid)"/>
</dbReference>
<dbReference type="neXtProt" id="NX_A0A1B0GX31"/>
<dbReference type="OpenTargets" id="ENSG00000211727"/>
<dbReference type="VEuPathDB" id="HostDB:ENSG00000211727"/>
<dbReference type="GeneTree" id="ENSGT00940000154460"/>
<dbReference type="InParanoid" id="A0A1B0GX31"/>
<dbReference type="OMA" id="ISGHEML"/>
<dbReference type="OrthoDB" id="9536814at2759"/>
<dbReference type="PAN-GO" id="A0A1B0GX31">
    <property type="GO annotations" value="2 GO annotations based on evolutionary models"/>
</dbReference>
<dbReference type="SignaLink" id="A0A1B0GX31"/>
<dbReference type="ChiTaRS" id="TRBV7-6">
    <property type="organism name" value="human"/>
</dbReference>
<dbReference type="Pharos" id="A0A1B0GX31">
    <property type="development level" value="Tdark"/>
</dbReference>
<dbReference type="PRO" id="PR:A0A1B0GX31"/>
<dbReference type="Proteomes" id="UP000005640">
    <property type="component" value="Chromosome 7"/>
</dbReference>
<dbReference type="Bgee" id="ENSG00000211727">
    <property type="expression patterns" value="Expressed in male germ line stem cell (sensu Vertebrata) in testis and 78 other cell types or tissues"/>
</dbReference>
<dbReference type="GO" id="GO:0005886">
    <property type="term" value="C:plasma membrane"/>
    <property type="evidence" value="ECO:0000318"/>
    <property type="project" value="GO_Central"/>
</dbReference>
<dbReference type="GO" id="GO:0042101">
    <property type="term" value="C:T cell receptor complex"/>
    <property type="evidence" value="ECO:0007669"/>
    <property type="project" value="UniProtKB-KW"/>
</dbReference>
<dbReference type="GO" id="GO:0002250">
    <property type="term" value="P:adaptive immune response"/>
    <property type="evidence" value="ECO:0007669"/>
    <property type="project" value="UniProtKB-KW"/>
</dbReference>
<dbReference type="GO" id="GO:0007166">
    <property type="term" value="P:cell surface receptor signaling pathway"/>
    <property type="evidence" value="ECO:0000318"/>
    <property type="project" value="GO_Central"/>
</dbReference>
<dbReference type="FunFam" id="2.60.40.10:FF:002491">
    <property type="entry name" value="T cell receptor beta variable 12-4"/>
    <property type="match status" value="1"/>
</dbReference>
<dbReference type="Gene3D" id="2.60.40.10">
    <property type="entry name" value="Immunoglobulins"/>
    <property type="match status" value="1"/>
</dbReference>
<dbReference type="InterPro" id="IPR007110">
    <property type="entry name" value="Ig-like_dom"/>
</dbReference>
<dbReference type="InterPro" id="IPR036179">
    <property type="entry name" value="Ig-like_dom_sf"/>
</dbReference>
<dbReference type="InterPro" id="IPR013783">
    <property type="entry name" value="Ig-like_fold"/>
</dbReference>
<dbReference type="InterPro" id="IPR013106">
    <property type="entry name" value="Ig_V-set"/>
</dbReference>
<dbReference type="InterPro" id="IPR050413">
    <property type="entry name" value="TCR_beta_variable"/>
</dbReference>
<dbReference type="PANTHER" id="PTHR23268:SF20">
    <property type="entry name" value="T CELL RECEPTOR BETA VARIABLE 7-4-RELATED"/>
    <property type="match status" value="1"/>
</dbReference>
<dbReference type="PANTHER" id="PTHR23268">
    <property type="entry name" value="T-CELL RECEPTOR BETA CHAIN"/>
    <property type="match status" value="1"/>
</dbReference>
<dbReference type="Pfam" id="PF07686">
    <property type="entry name" value="V-set"/>
    <property type="match status" value="1"/>
</dbReference>
<dbReference type="SMART" id="SM00406">
    <property type="entry name" value="IGv"/>
    <property type="match status" value="1"/>
</dbReference>
<dbReference type="SUPFAM" id="SSF48726">
    <property type="entry name" value="Immunoglobulin"/>
    <property type="match status" value="1"/>
</dbReference>
<dbReference type="PROSITE" id="PS50835">
    <property type="entry name" value="IG_LIKE"/>
    <property type="match status" value="1"/>
</dbReference>
<sequence>MGTSLLCWVVLGFLGTDHTGAGVSQSPRYKVTKRGQDVALRCDPISGHVSLYWYRQALGQGPEFLTYFNYEAQQDKSGLPNDRFSAERPEGSISTLTIQRTEQRDSAMYRCASSL</sequence>
<keyword id="KW-1064">Adaptive immunity</keyword>
<keyword id="KW-1003">Cell membrane</keyword>
<keyword id="KW-1015">Disulfide bond</keyword>
<keyword id="KW-0391">Immunity</keyword>
<keyword id="KW-0393">Immunoglobulin domain</keyword>
<keyword id="KW-0472">Membrane</keyword>
<keyword id="KW-0675">Receptor</keyword>
<keyword id="KW-1185">Reference proteome</keyword>
<keyword id="KW-0732">Signal</keyword>
<keyword id="KW-1279">T cell receptor</keyword>